<gene>
    <name evidence="1" type="primary">pan</name>
    <name type="ordered locus">YG5714_1946</name>
</gene>
<comment type="function">
    <text evidence="1">ATPase which is responsible for recognizing, binding, unfolding and translocation of substrate proteins into the archaeal 20S proteasome core particle. Is essential for opening the gate of the 20S proteasome via an interaction with its C-terminus, thereby allowing substrate entry and access to the site of proteolysis. Thus, the C-termini of the proteasomal ATPase function like a 'key in a lock' to induce gate opening and therefore regulate proteolysis. Unfolding activity requires energy from ATP hydrolysis, whereas ATP binding alone promotes ATPase-20S proteasome association which triggers gate opening, and supports translocation of unfolded substrates.</text>
</comment>
<comment type="subunit">
    <text evidence="1">Homohexamer. The hexameric complex has a two-ring architecture resembling a top hat that caps the 20S proteasome core at one or both ends. Upon ATP-binding, the C-terminus of PAN interacts with the alpha-rings of the proteasome core by binding to the intersubunit pockets.</text>
</comment>
<comment type="subcellular location">
    <subcellularLocation>
        <location evidence="1">Cytoplasm</location>
    </subcellularLocation>
</comment>
<comment type="domain">
    <text evidence="1">Consists of three main regions, an N-terminal coiled-coil domain that may assist in substrate recognition, an interdomain involved in PAN hexamerization, and a C-terminal ATPase domain of the AAA type.</text>
</comment>
<comment type="similarity">
    <text evidence="1">Belongs to the AAA ATPase family.</text>
</comment>
<accession>C3N7K8</accession>
<keyword id="KW-0067">ATP-binding</keyword>
<keyword id="KW-0143">Chaperone</keyword>
<keyword id="KW-0175">Coiled coil</keyword>
<keyword id="KW-0963">Cytoplasm</keyword>
<keyword id="KW-0547">Nucleotide-binding</keyword>
<keyword id="KW-0647">Proteasome</keyword>
<evidence type="ECO:0000255" key="1">
    <source>
        <dbReference type="HAMAP-Rule" id="MF_00553"/>
    </source>
</evidence>
<dbReference type="EMBL" id="CP001403">
    <property type="protein sequence ID" value="ACP46202.1"/>
    <property type="molecule type" value="Genomic_DNA"/>
</dbReference>
<dbReference type="RefSeq" id="WP_012711834.1">
    <property type="nucleotide sequence ID" value="NC_012622.1"/>
</dbReference>
<dbReference type="SMR" id="C3N7K8"/>
<dbReference type="KEGG" id="siy:YG5714_1946"/>
<dbReference type="HOGENOM" id="CLU_000688_2_0_2"/>
<dbReference type="Proteomes" id="UP000002308">
    <property type="component" value="Chromosome"/>
</dbReference>
<dbReference type="GO" id="GO:0005737">
    <property type="term" value="C:cytoplasm"/>
    <property type="evidence" value="ECO:0007669"/>
    <property type="project" value="UniProtKB-SubCell"/>
</dbReference>
<dbReference type="GO" id="GO:0022623">
    <property type="term" value="C:proteasome-activating nucleotidase complex"/>
    <property type="evidence" value="ECO:0007669"/>
    <property type="project" value="UniProtKB-UniRule"/>
</dbReference>
<dbReference type="GO" id="GO:0005524">
    <property type="term" value="F:ATP binding"/>
    <property type="evidence" value="ECO:0007669"/>
    <property type="project" value="UniProtKB-UniRule"/>
</dbReference>
<dbReference type="GO" id="GO:0016887">
    <property type="term" value="F:ATP hydrolysis activity"/>
    <property type="evidence" value="ECO:0007669"/>
    <property type="project" value="UniProtKB-UniRule"/>
</dbReference>
<dbReference type="GO" id="GO:0010498">
    <property type="term" value="P:proteasomal protein catabolic process"/>
    <property type="evidence" value="ECO:0007669"/>
    <property type="project" value="UniProtKB-UniRule"/>
</dbReference>
<dbReference type="GO" id="GO:0043335">
    <property type="term" value="P:protein unfolding"/>
    <property type="evidence" value="ECO:0007669"/>
    <property type="project" value="UniProtKB-UniRule"/>
</dbReference>
<dbReference type="CDD" id="cd19502">
    <property type="entry name" value="RecA-like_PAN_like"/>
    <property type="match status" value="1"/>
</dbReference>
<dbReference type="FunFam" id="3.40.50.300:FF:000033">
    <property type="entry name" value="26S protease regulatory subunit 6B"/>
    <property type="match status" value="1"/>
</dbReference>
<dbReference type="FunFam" id="1.10.8.60:FF:000001">
    <property type="entry name" value="ATP-dependent zinc metalloprotease FtsH"/>
    <property type="match status" value="1"/>
</dbReference>
<dbReference type="Gene3D" id="1.10.8.60">
    <property type="match status" value="1"/>
</dbReference>
<dbReference type="Gene3D" id="2.40.50.140">
    <property type="entry name" value="Nucleic acid-binding proteins"/>
    <property type="match status" value="1"/>
</dbReference>
<dbReference type="Gene3D" id="3.40.50.300">
    <property type="entry name" value="P-loop containing nucleotide triphosphate hydrolases"/>
    <property type="match status" value="1"/>
</dbReference>
<dbReference type="HAMAP" id="MF_00553">
    <property type="entry name" value="PAN"/>
    <property type="match status" value="1"/>
</dbReference>
<dbReference type="InterPro" id="IPR050221">
    <property type="entry name" value="26S_Proteasome_ATPase"/>
</dbReference>
<dbReference type="InterPro" id="IPR003593">
    <property type="entry name" value="AAA+_ATPase"/>
</dbReference>
<dbReference type="InterPro" id="IPR041569">
    <property type="entry name" value="AAA_lid_3"/>
</dbReference>
<dbReference type="InterPro" id="IPR003959">
    <property type="entry name" value="ATPase_AAA_core"/>
</dbReference>
<dbReference type="InterPro" id="IPR003960">
    <property type="entry name" value="ATPase_AAA_CS"/>
</dbReference>
<dbReference type="InterPro" id="IPR012340">
    <property type="entry name" value="NA-bd_OB-fold"/>
</dbReference>
<dbReference type="InterPro" id="IPR023501">
    <property type="entry name" value="Nucleotidase_PAN"/>
</dbReference>
<dbReference type="InterPro" id="IPR027417">
    <property type="entry name" value="P-loop_NTPase"/>
</dbReference>
<dbReference type="InterPro" id="IPR032501">
    <property type="entry name" value="Prot_ATP_ID_OB_2nd"/>
</dbReference>
<dbReference type="NCBIfam" id="NF003069">
    <property type="entry name" value="PRK03992.1"/>
    <property type="match status" value="1"/>
</dbReference>
<dbReference type="NCBIfam" id="TIGR01242">
    <property type="entry name" value="proteasome-activating nucleotidase"/>
    <property type="match status" value="1"/>
</dbReference>
<dbReference type="PANTHER" id="PTHR23073">
    <property type="entry name" value="26S PROTEASOME REGULATORY SUBUNIT"/>
    <property type="match status" value="1"/>
</dbReference>
<dbReference type="Pfam" id="PF00004">
    <property type="entry name" value="AAA"/>
    <property type="match status" value="1"/>
</dbReference>
<dbReference type="Pfam" id="PF17862">
    <property type="entry name" value="AAA_lid_3"/>
    <property type="match status" value="1"/>
</dbReference>
<dbReference type="Pfam" id="PF16450">
    <property type="entry name" value="Prot_ATP_ID_OB_C"/>
    <property type="match status" value="1"/>
</dbReference>
<dbReference type="SMART" id="SM00382">
    <property type="entry name" value="AAA"/>
    <property type="match status" value="1"/>
</dbReference>
<dbReference type="SUPFAM" id="SSF52540">
    <property type="entry name" value="P-loop containing nucleoside triphosphate hydrolases"/>
    <property type="match status" value="1"/>
</dbReference>
<dbReference type="PROSITE" id="PS00674">
    <property type="entry name" value="AAA"/>
    <property type="match status" value="1"/>
</dbReference>
<reference key="1">
    <citation type="journal article" date="2009" name="Proc. Natl. Acad. Sci. U.S.A.">
        <title>Biogeography of the Sulfolobus islandicus pan-genome.</title>
        <authorList>
            <person name="Reno M.L."/>
            <person name="Held N.L."/>
            <person name="Fields C.J."/>
            <person name="Burke P.V."/>
            <person name="Whitaker R.J."/>
        </authorList>
    </citation>
    <scope>NUCLEOTIDE SEQUENCE [LARGE SCALE GENOMIC DNA]</scope>
    <source>
        <strain>Y.G.57.14 / Yellowstone #1</strain>
    </source>
</reference>
<feature type="chain" id="PRO_1000212009" description="Proteasome-activating nucleotidase">
    <location>
        <begin position="1"/>
        <end position="393"/>
    </location>
</feature>
<feature type="region of interest" description="Docks into pockets in the proteasome alpha-ring to cause gate opening" evidence="1">
    <location>
        <begin position="391"/>
        <end position="393"/>
    </location>
</feature>
<feature type="coiled-coil region" evidence="1">
    <location>
        <begin position="14"/>
        <end position="53"/>
    </location>
</feature>
<feature type="binding site" evidence="1">
    <location>
        <begin position="178"/>
        <end position="183"/>
    </location>
    <ligand>
        <name>ATP</name>
        <dbReference type="ChEBI" id="CHEBI:30616"/>
    </ligand>
</feature>
<feature type="binding site" evidence="1">
    <location>
        <position position="317"/>
    </location>
    <ligand>
        <name>ATP</name>
        <dbReference type="ChEBI" id="CHEBI:30616"/>
    </ligand>
</feature>
<sequence length="393" mass="44020">MSGDFDTIRDASSSDEVQLVRLLEEKIKSLQIEIENLRKELNYYKAEMEKMLSPPLIEAVVLDVLPDGRVLVRSSSGPNLVVNVASHIDQKLIKPGVSVALNQRGSTILEVLPQKEDPIVKTMEIVEKPNVTYSEIGGLEEQIKELREVVELPLKKPEIFREIGVEPPKGVLLYGPPGTGKTMLAKAVATESNAVFIHVVASEFAQKFVGEGARIVRELFEMAKRKAPSIIFIDEIDAIGAKRIDIGTSGEREIQRTLMQLLAELDGFNPLDNVKIIAATNRIDILDPALLRPGRFDRIIEVPLPDFRGRTEIFNIYLKKMKVEDNINLELLSQLSEGFSGADIKNVCVEAAYMAIRDGRNKVTMKDLVDAITKINVKRNNMESMKERREKYS</sequence>
<proteinExistence type="inferred from homology"/>
<organism>
    <name type="scientific">Saccharolobus islandicus (strain Y.G.57.14 / Yellowstone #1)</name>
    <name type="common">Sulfolobus islandicus</name>
    <dbReference type="NCBI Taxonomy" id="439386"/>
    <lineage>
        <taxon>Archaea</taxon>
        <taxon>Thermoproteota</taxon>
        <taxon>Thermoprotei</taxon>
        <taxon>Sulfolobales</taxon>
        <taxon>Sulfolobaceae</taxon>
        <taxon>Saccharolobus</taxon>
    </lineage>
</organism>
<protein>
    <recommendedName>
        <fullName evidence="1">Proteasome-activating nucleotidase</fullName>
        <shortName evidence="1">PAN</shortName>
    </recommendedName>
    <alternativeName>
        <fullName evidence="1">Proteasomal ATPase</fullName>
    </alternativeName>
    <alternativeName>
        <fullName evidence="1">Proteasome regulatory ATPase</fullName>
    </alternativeName>
    <alternativeName>
        <fullName evidence="1">Proteasome regulatory particle</fullName>
    </alternativeName>
</protein>
<name>PAN_SACI7</name>